<name>CAPSD_HASV</name>
<keyword id="KW-0002">3D-structure</keyword>
<keyword id="KW-0167">Capsid protein</keyword>
<keyword id="KW-0903">Direct protein sequencing</keyword>
<keyword id="KW-1185">Reference proteome</keyword>
<keyword id="KW-1144">T=4 icosahedral capsid protein</keyword>
<keyword id="KW-0946">Virion</keyword>
<feature type="chain" id="PRO_0000402488" description="64 kDa capsid protein">
    <location>
        <begin position="1"/>
        <end position="575"/>
    </location>
</feature>
<feature type="chain" id="PRO_0000402489" description="7 kDa capsid protein">
    <location>
        <begin position="576"/>
        <end position="647"/>
    </location>
</feature>
<feature type="region of interest" description="Disordered" evidence="3">
    <location>
        <begin position="1"/>
        <end position="48"/>
    </location>
</feature>
<feature type="site" description="Cleavage" evidence="2">
    <location>
        <begin position="575"/>
        <end position="576"/>
    </location>
</feature>
<feature type="helix" evidence="5">
    <location>
        <begin position="51"/>
        <end position="58"/>
    </location>
</feature>
<feature type="helix" evidence="5">
    <location>
        <begin position="62"/>
        <end position="64"/>
    </location>
</feature>
<feature type="strand" evidence="5">
    <location>
        <begin position="65"/>
        <end position="67"/>
    </location>
</feature>
<feature type="strand" evidence="5">
    <location>
        <begin position="69"/>
        <end position="71"/>
    </location>
</feature>
<feature type="helix" evidence="5">
    <location>
        <begin position="75"/>
        <end position="82"/>
    </location>
</feature>
<feature type="helix" evidence="5">
    <location>
        <begin position="89"/>
        <end position="99"/>
    </location>
</feature>
<feature type="helix" evidence="5">
    <location>
        <begin position="101"/>
        <end position="106"/>
    </location>
</feature>
<feature type="strand" evidence="5">
    <location>
        <begin position="123"/>
        <end position="136"/>
    </location>
</feature>
<feature type="strand" evidence="5">
    <location>
        <begin position="152"/>
        <end position="159"/>
    </location>
</feature>
<feature type="strand" evidence="5">
    <location>
        <begin position="162"/>
        <end position="172"/>
    </location>
</feature>
<feature type="helix" evidence="5">
    <location>
        <begin position="180"/>
        <end position="191"/>
    </location>
</feature>
<feature type="helix" evidence="5">
    <location>
        <begin position="196"/>
        <end position="202"/>
    </location>
</feature>
<feature type="strand" evidence="5">
    <location>
        <begin position="209"/>
        <end position="211"/>
    </location>
</feature>
<feature type="strand" evidence="5">
    <location>
        <begin position="214"/>
        <end position="220"/>
    </location>
</feature>
<feature type="helix" evidence="5">
    <location>
        <begin position="222"/>
        <end position="225"/>
    </location>
</feature>
<feature type="strand" evidence="5">
    <location>
        <begin position="231"/>
        <end position="234"/>
    </location>
</feature>
<feature type="strand" evidence="5">
    <location>
        <begin position="239"/>
        <end position="253"/>
    </location>
</feature>
<feature type="helix" evidence="5">
    <location>
        <begin position="256"/>
        <end position="258"/>
    </location>
</feature>
<feature type="strand" evidence="5">
    <location>
        <begin position="262"/>
        <end position="268"/>
    </location>
</feature>
<feature type="strand" evidence="5">
    <location>
        <begin position="273"/>
        <end position="278"/>
    </location>
</feature>
<feature type="strand" evidence="5">
    <location>
        <begin position="280"/>
        <end position="284"/>
    </location>
</feature>
<feature type="strand" evidence="5">
    <location>
        <begin position="289"/>
        <end position="293"/>
    </location>
</feature>
<feature type="strand" evidence="5">
    <location>
        <begin position="295"/>
        <end position="298"/>
    </location>
</feature>
<feature type="strand" evidence="5">
    <location>
        <begin position="300"/>
        <end position="309"/>
    </location>
</feature>
<feature type="strand" evidence="5">
    <location>
        <begin position="321"/>
        <end position="323"/>
    </location>
</feature>
<feature type="strand" evidence="5">
    <location>
        <begin position="325"/>
        <end position="333"/>
    </location>
</feature>
<feature type="strand" evidence="5">
    <location>
        <begin position="343"/>
        <end position="346"/>
    </location>
</feature>
<feature type="strand" evidence="5">
    <location>
        <begin position="352"/>
        <end position="357"/>
    </location>
</feature>
<feature type="turn" evidence="5">
    <location>
        <begin position="358"/>
        <end position="361"/>
    </location>
</feature>
<feature type="strand" evidence="5">
    <location>
        <begin position="362"/>
        <end position="368"/>
    </location>
</feature>
<feature type="strand" evidence="5">
    <location>
        <begin position="372"/>
        <end position="377"/>
    </location>
</feature>
<feature type="strand" evidence="5">
    <location>
        <begin position="379"/>
        <end position="388"/>
    </location>
</feature>
<feature type="strand" evidence="5">
    <location>
        <begin position="390"/>
        <end position="393"/>
    </location>
</feature>
<feature type="strand" evidence="5">
    <location>
        <begin position="397"/>
        <end position="401"/>
    </location>
</feature>
<feature type="strand" evidence="5">
    <location>
        <begin position="406"/>
        <end position="411"/>
    </location>
</feature>
<feature type="strand" evidence="5">
    <location>
        <begin position="413"/>
        <end position="415"/>
    </location>
</feature>
<feature type="strand" evidence="5">
    <location>
        <begin position="417"/>
        <end position="420"/>
    </location>
</feature>
<feature type="strand" evidence="5">
    <location>
        <begin position="425"/>
        <end position="430"/>
    </location>
</feature>
<feature type="helix" evidence="5">
    <location>
        <begin position="436"/>
        <end position="442"/>
    </location>
</feature>
<feature type="strand" evidence="5">
    <location>
        <begin position="447"/>
        <end position="450"/>
    </location>
</feature>
<feature type="helix" evidence="5">
    <location>
        <begin position="451"/>
        <end position="454"/>
    </location>
</feature>
<feature type="strand" evidence="5">
    <location>
        <begin position="455"/>
        <end position="460"/>
    </location>
</feature>
<feature type="strand" evidence="5">
    <location>
        <begin position="465"/>
        <end position="468"/>
    </location>
</feature>
<feature type="strand" evidence="5">
    <location>
        <begin position="472"/>
        <end position="474"/>
    </location>
</feature>
<feature type="strand" evidence="5">
    <location>
        <begin position="477"/>
        <end position="483"/>
    </location>
</feature>
<feature type="helix" evidence="5">
    <location>
        <begin position="489"/>
        <end position="491"/>
    </location>
</feature>
<feature type="strand" evidence="5">
    <location>
        <begin position="494"/>
        <end position="496"/>
    </location>
</feature>
<feature type="strand" evidence="5">
    <location>
        <begin position="505"/>
        <end position="507"/>
    </location>
</feature>
<feature type="strand" evidence="5">
    <location>
        <begin position="509"/>
        <end position="518"/>
    </location>
</feature>
<feature type="strand" evidence="5">
    <location>
        <begin position="522"/>
        <end position="534"/>
    </location>
</feature>
<feature type="helix" evidence="5">
    <location>
        <begin position="542"/>
        <end position="544"/>
    </location>
</feature>
<feature type="helix" evidence="5">
    <location>
        <begin position="553"/>
        <end position="565"/>
    </location>
</feature>
<feature type="strand" evidence="5">
    <location>
        <begin position="568"/>
        <end position="571"/>
    </location>
</feature>
<feature type="helix" evidence="5">
    <location>
        <begin position="572"/>
        <end position="574"/>
    </location>
</feature>
<feature type="helix" evidence="5">
    <location>
        <begin position="579"/>
        <end position="607"/>
    </location>
</feature>
<feature type="helix" evidence="5">
    <location>
        <begin position="632"/>
        <end position="646"/>
    </location>
</feature>
<accession>Q82462</accession>
<organismHost>
    <name type="scientific">Helicoverpa armigera</name>
    <name type="common">Cotton bollworm</name>
    <name type="synonym">Heliothis armigera</name>
    <dbReference type="NCBI Taxonomy" id="29058"/>
</organismHost>
<protein>
    <recommendedName>
        <fullName>Capsid protein</fullName>
        <shortName>CP</shortName>
    </recommendedName>
    <alternativeName>
        <fullName>Coat protein</fullName>
    </alternativeName>
    <component>
        <recommendedName>
            <fullName>64 kDa capsid protein</fullName>
        </recommendedName>
    </component>
    <component>
        <recommendedName>
            <fullName>7 kDa capsid protein</fullName>
        </recommendedName>
    </component>
</protein>
<gene>
    <name type="primary">p71</name>
</gene>
<sequence length="647" mass="70670">MGDAGVASQRPHNRRGTRNVRVSANTVTVNGRRNQRRRTGRQVSPPDNFTAAAQDLAQSLDANTVTFPANISSMPEFRNWAKGKIDLDSDSIGWYFKYLDPAGATESARAVGEYSKIPDGLVKFSVDAEIREIYNEECPVVTDVSVPLDGRQWSLSIFSFPMFRTAYVAVANVENKEMSLDVVNDLIEWLNNLADWRYVVDSEQWINFTNDTTYYVRIRVLRPTYDVPDPTEGLVRTVSDYRLTYKAITCEANMPTLVDQGFWIGGQYALTPTSLPQYDVSEAYALHTLTFARPSSAAALAFVWAGLPQGGTAPAGTPAWEQASSGGYLTWRHNGTTFPAGSVSYVLPEGFALERYDPNDGSWTDFASAGDTVTFRQVAVDEVVVTNNPAGGGSAPTFTVRVPPSNAYTNTVFRNTLLETRPSSRRLELPMPPADFGQTVANNPKIEQSLLKETLGCYLVHSKMRNPVFQLTPASSFGAVSFNNPGYERTRDLPDYTGIRDSFDQNMSTAVAHFRSLSHSCSIVTKTYQGWEGVTNVNTPFGQFAHAGLLKNEEILCLADDLATRLTGVYPATDNFAAAVSAFAANMLSSVLKSEATSSIIKSVGETAVGAAQSGLAKLPGLLMSVPGKIAARVRARRARRRAARAN</sequence>
<organism>
    <name type="scientific">Helicoverpa armigera stunt virus</name>
    <name type="common">HaSV</name>
    <dbReference type="NCBI Taxonomy" id="37206"/>
    <lineage>
        <taxon>Viruses</taxon>
        <taxon>Riboviria</taxon>
        <taxon>Orthornavirae</taxon>
        <taxon>Kitrinoviricota</taxon>
        <taxon>Alsuviricetes</taxon>
        <taxon>Hepelivirales</taxon>
        <taxon>Alphatetraviridae</taxon>
        <taxon>Omegatetravirus</taxon>
    </lineage>
</organism>
<comment type="function">
    <text evidence="1">Self-assembles to form an icosahedral capsid with a T=4 symmetry, about 35 nm in diameter, and consisting of 240 copies of the two structural proteins.</text>
</comment>
<comment type="subcellular location">
    <subcellularLocation>
        <location evidence="1">Virion</location>
    </subcellularLocation>
</comment>
<comment type="similarity">
    <text evidence="4">Belongs to the tetravirus capsid protein family.</text>
</comment>
<dbReference type="EMBL" id="L37299">
    <property type="protein sequence ID" value="AAC37885.1"/>
    <property type="molecule type" value="Genomic_RNA"/>
</dbReference>
<dbReference type="RefSeq" id="NP_049237.1">
    <property type="nucleotide sequence ID" value="NC_001982.1"/>
</dbReference>
<dbReference type="PDB" id="3S6P">
    <property type="method" value="X-ray"/>
    <property type="resolution" value="2.50 A"/>
    <property type="chains" value="A/B/C/D=1-575, E/F/G/H=576-647"/>
</dbReference>
<dbReference type="PDBsum" id="3S6P"/>
<dbReference type="SMR" id="Q82462"/>
<dbReference type="MEROPS" id="N02.001"/>
<dbReference type="GeneID" id="991182"/>
<dbReference type="KEGG" id="vg:991182"/>
<dbReference type="OrthoDB" id="3322at10239"/>
<dbReference type="EvolutionaryTrace" id="Q82462"/>
<dbReference type="Proteomes" id="UP000006711">
    <property type="component" value="Genome"/>
</dbReference>
<dbReference type="GO" id="GO:0039619">
    <property type="term" value="C:T=4 icosahedral viral capsid"/>
    <property type="evidence" value="ECO:0007669"/>
    <property type="project" value="UniProtKB-KW"/>
</dbReference>
<dbReference type="Gene3D" id="1.20.1690.20">
    <property type="match status" value="1"/>
</dbReference>
<dbReference type="Gene3D" id="2.60.120.20">
    <property type="match status" value="2"/>
</dbReference>
<dbReference type="Gene3D" id="6.10.140.1660">
    <property type="match status" value="1"/>
</dbReference>
<dbReference type="InterPro" id="IPR005313">
    <property type="entry name" value="Peptidase_N2"/>
</dbReference>
<dbReference type="InterPro" id="IPR029053">
    <property type="entry name" value="Viral_coat"/>
</dbReference>
<dbReference type="Pfam" id="PF03566">
    <property type="entry name" value="Peptidase_A21"/>
    <property type="match status" value="1"/>
</dbReference>
<dbReference type="PIRSF" id="PIRSF007212">
    <property type="entry name" value="Peptidase_A21"/>
    <property type="match status" value="1"/>
</dbReference>
<dbReference type="SUPFAM" id="SSF88633">
    <property type="entry name" value="Positive stranded ssRNA viruses"/>
    <property type="match status" value="1"/>
</dbReference>
<proteinExistence type="evidence at protein level"/>
<reference key="1">
    <citation type="journal article" date="1995" name="J. Gen. Virol.">
        <title>Sequence of RNA2 of the Helicoverpa armigera stunt virus (Tetraviridae) and bacterial expression of its genes.</title>
        <authorList>
            <person name="Hanzlik T.N."/>
            <person name="Dorrian S.J."/>
            <person name="Johnson K.N."/>
            <person name="Brooks E.M."/>
            <person name="Gordon K.H."/>
        </authorList>
    </citation>
    <scope>NUCLEOTIDE SEQUENCE [GENOMIC RNA]</scope>
</reference>
<reference key="2">
    <citation type="journal article" date="1993" name="J. Gen. Virol.">
        <title>A novel small RNA virus isolated from the cotton bollworm, Helicoverpa armigera.</title>
        <authorList>
            <person name="Hanzlik T.N."/>
            <person name="Dorrian S.J."/>
            <person name="Gordon K.H."/>
            <person name="Christian P.D."/>
        </authorList>
    </citation>
    <scope>PROTEIN SEQUENCE OF 255-274 AND 576-596</scope>
</reference>
<evidence type="ECO:0000250" key="1"/>
<evidence type="ECO:0000255" key="2"/>
<evidence type="ECO:0000256" key="3">
    <source>
        <dbReference type="SAM" id="MobiDB-lite"/>
    </source>
</evidence>
<evidence type="ECO:0000305" key="4"/>
<evidence type="ECO:0007829" key="5">
    <source>
        <dbReference type="PDB" id="3S6P"/>
    </source>
</evidence>